<name>ERA_LYSSC</name>
<evidence type="ECO:0000255" key="1">
    <source>
        <dbReference type="HAMAP-Rule" id="MF_00367"/>
    </source>
</evidence>
<evidence type="ECO:0000255" key="2">
    <source>
        <dbReference type="PROSITE-ProRule" id="PRU01050"/>
    </source>
</evidence>
<accession>B1HTJ0</accession>
<keyword id="KW-1003">Cell membrane</keyword>
<keyword id="KW-0963">Cytoplasm</keyword>
<keyword id="KW-0342">GTP-binding</keyword>
<keyword id="KW-0472">Membrane</keyword>
<keyword id="KW-0547">Nucleotide-binding</keyword>
<keyword id="KW-0690">Ribosome biogenesis</keyword>
<keyword id="KW-0694">RNA-binding</keyword>
<keyword id="KW-0699">rRNA-binding</keyword>
<protein>
    <recommendedName>
        <fullName evidence="1">GTPase Era</fullName>
    </recommendedName>
</protein>
<reference key="1">
    <citation type="journal article" date="2008" name="J. Bacteriol.">
        <title>Complete genome sequence of the mosquitocidal bacterium Bacillus sphaericus C3-41 and comparison with those of closely related Bacillus species.</title>
        <authorList>
            <person name="Hu X."/>
            <person name="Fan W."/>
            <person name="Han B."/>
            <person name="Liu H."/>
            <person name="Zheng D."/>
            <person name="Li Q."/>
            <person name="Dong W."/>
            <person name="Yan J."/>
            <person name="Gao M."/>
            <person name="Berry C."/>
            <person name="Yuan Z."/>
        </authorList>
    </citation>
    <scope>NUCLEOTIDE SEQUENCE [LARGE SCALE GENOMIC DNA]</scope>
    <source>
        <strain>C3-41</strain>
    </source>
</reference>
<dbReference type="EMBL" id="CP000817">
    <property type="protein sequence ID" value="ACA41194.1"/>
    <property type="molecule type" value="Genomic_DNA"/>
</dbReference>
<dbReference type="RefSeq" id="WP_012295248.1">
    <property type="nucleotide sequence ID" value="NC_010382.1"/>
</dbReference>
<dbReference type="SMR" id="B1HTJ0"/>
<dbReference type="EnsemblBacteria" id="ACA41194">
    <property type="protein sequence ID" value="ACA41194"/>
    <property type="gene ID" value="Bsph_3710"/>
</dbReference>
<dbReference type="KEGG" id="lsp:Bsph_3710"/>
<dbReference type="HOGENOM" id="CLU_038009_1_0_9"/>
<dbReference type="Proteomes" id="UP000002164">
    <property type="component" value="Chromosome"/>
</dbReference>
<dbReference type="GO" id="GO:0005829">
    <property type="term" value="C:cytosol"/>
    <property type="evidence" value="ECO:0007669"/>
    <property type="project" value="TreeGrafter"/>
</dbReference>
<dbReference type="GO" id="GO:0005886">
    <property type="term" value="C:plasma membrane"/>
    <property type="evidence" value="ECO:0007669"/>
    <property type="project" value="UniProtKB-SubCell"/>
</dbReference>
<dbReference type="GO" id="GO:0005525">
    <property type="term" value="F:GTP binding"/>
    <property type="evidence" value="ECO:0007669"/>
    <property type="project" value="UniProtKB-UniRule"/>
</dbReference>
<dbReference type="GO" id="GO:0003924">
    <property type="term" value="F:GTPase activity"/>
    <property type="evidence" value="ECO:0007669"/>
    <property type="project" value="UniProtKB-UniRule"/>
</dbReference>
<dbReference type="GO" id="GO:0043024">
    <property type="term" value="F:ribosomal small subunit binding"/>
    <property type="evidence" value="ECO:0007669"/>
    <property type="project" value="TreeGrafter"/>
</dbReference>
<dbReference type="GO" id="GO:0070181">
    <property type="term" value="F:small ribosomal subunit rRNA binding"/>
    <property type="evidence" value="ECO:0007669"/>
    <property type="project" value="UniProtKB-UniRule"/>
</dbReference>
<dbReference type="GO" id="GO:0000028">
    <property type="term" value="P:ribosomal small subunit assembly"/>
    <property type="evidence" value="ECO:0007669"/>
    <property type="project" value="TreeGrafter"/>
</dbReference>
<dbReference type="CDD" id="cd04163">
    <property type="entry name" value="Era"/>
    <property type="match status" value="1"/>
</dbReference>
<dbReference type="CDD" id="cd22534">
    <property type="entry name" value="KH-II_Era"/>
    <property type="match status" value="1"/>
</dbReference>
<dbReference type="FunFam" id="3.30.300.20:FF:000003">
    <property type="entry name" value="GTPase Era"/>
    <property type="match status" value="1"/>
</dbReference>
<dbReference type="FunFam" id="3.40.50.300:FF:000094">
    <property type="entry name" value="GTPase Era"/>
    <property type="match status" value="1"/>
</dbReference>
<dbReference type="Gene3D" id="3.30.300.20">
    <property type="match status" value="1"/>
</dbReference>
<dbReference type="Gene3D" id="3.40.50.300">
    <property type="entry name" value="P-loop containing nucleotide triphosphate hydrolases"/>
    <property type="match status" value="1"/>
</dbReference>
<dbReference type="HAMAP" id="MF_00367">
    <property type="entry name" value="GTPase_Era"/>
    <property type="match status" value="1"/>
</dbReference>
<dbReference type="InterPro" id="IPR030388">
    <property type="entry name" value="G_ERA_dom"/>
</dbReference>
<dbReference type="InterPro" id="IPR006073">
    <property type="entry name" value="GTP-bd"/>
</dbReference>
<dbReference type="InterPro" id="IPR005662">
    <property type="entry name" value="GTPase_Era-like"/>
</dbReference>
<dbReference type="InterPro" id="IPR015946">
    <property type="entry name" value="KH_dom-like_a/b"/>
</dbReference>
<dbReference type="InterPro" id="IPR004044">
    <property type="entry name" value="KH_dom_type_2"/>
</dbReference>
<dbReference type="InterPro" id="IPR009019">
    <property type="entry name" value="KH_sf_prok-type"/>
</dbReference>
<dbReference type="InterPro" id="IPR027417">
    <property type="entry name" value="P-loop_NTPase"/>
</dbReference>
<dbReference type="InterPro" id="IPR005225">
    <property type="entry name" value="Small_GTP-bd"/>
</dbReference>
<dbReference type="NCBIfam" id="TIGR00436">
    <property type="entry name" value="era"/>
    <property type="match status" value="1"/>
</dbReference>
<dbReference type="NCBIfam" id="NF000908">
    <property type="entry name" value="PRK00089.1"/>
    <property type="match status" value="1"/>
</dbReference>
<dbReference type="NCBIfam" id="TIGR00231">
    <property type="entry name" value="small_GTP"/>
    <property type="match status" value="1"/>
</dbReference>
<dbReference type="PANTHER" id="PTHR42698">
    <property type="entry name" value="GTPASE ERA"/>
    <property type="match status" value="1"/>
</dbReference>
<dbReference type="PANTHER" id="PTHR42698:SF1">
    <property type="entry name" value="GTPASE ERA, MITOCHONDRIAL"/>
    <property type="match status" value="1"/>
</dbReference>
<dbReference type="Pfam" id="PF07650">
    <property type="entry name" value="KH_2"/>
    <property type="match status" value="1"/>
</dbReference>
<dbReference type="Pfam" id="PF01926">
    <property type="entry name" value="MMR_HSR1"/>
    <property type="match status" value="1"/>
</dbReference>
<dbReference type="SUPFAM" id="SSF52540">
    <property type="entry name" value="P-loop containing nucleoside triphosphate hydrolases"/>
    <property type="match status" value="1"/>
</dbReference>
<dbReference type="SUPFAM" id="SSF54814">
    <property type="entry name" value="Prokaryotic type KH domain (KH-domain type II)"/>
    <property type="match status" value="1"/>
</dbReference>
<dbReference type="PROSITE" id="PS51713">
    <property type="entry name" value="G_ERA"/>
    <property type="match status" value="1"/>
</dbReference>
<dbReference type="PROSITE" id="PS50823">
    <property type="entry name" value="KH_TYPE_2"/>
    <property type="match status" value="1"/>
</dbReference>
<feature type="chain" id="PRO_1000189967" description="GTPase Era">
    <location>
        <begin position="1"/>
        <end position="305"/>
    </location>
</feature>
<feature type="domain" description="Era-type G" evidence="2">
    <location>
        <begin position="9"/>
        <end position="176"/>
    </location>
</feature>
<feature type="domain" description="KH type-2" evidence="1">
    <location>
        <begin position="207"/>
        <end position="286"/>
    </location>
</feature>
<feature type="region of interest" description="G1" evidence="2">
    <location>
        <begin position="17"/>
        <end position="24"/>
    </location>
</feature>
<feature type="region of interest" description="G2" evidence="2">
    <location>
        <begin position="43"/>
        <end position="47"/>
    </location>
</feature>
<feature type="region of interest" description="G3" evidence="2">
    <location>
        <begin position="64"/>
        <end position="67"/>
    </location>
</feature>
<feature type="region of interest" description="G4" evidence="2">
    <location>
        <begin position="126"/>
        <end position="129"/>
    </location>
</feature>
<feature type="region of interest" description="G5" evidence="2">
    <location>
        <begin position="155"/>
        <end position="157"/>
    </location>
</feature>
<feature type="binding site" evidence="1">
    <location>
        <begin position="17"/>
        <end position="24"/>
    </location>
    <ligand>
        <name>GTP</name>
        <dbReference type="ChEBI" id="CHEBI:37565"/>
    </ligand>
</feature>
<feature type="binding site" evidence="1">
    <location>
        <begin position="64"/>
        <end position="68"/>
    </location>
    <ligand>
        <name>GTP</name>
        <dbReference type="ChEBI" id="CHEBI:37565"/>
    </ligand>
</feature>
<feature type="binding site" evidence="1">
    <location>
        <begin position="126"/>
        <end position="129"/>
    </location>
    <ligand>
        <name>GTP</name>
        <dbReference type="ChEBI" id="CHEBI:37565"/>
    </ligand>
</feature>
<comment type="function">
    <text evidence="1">An essential GTPase that binds both GDP and GTP, with rapid nucleotide exchange. Plays a role in 16S rRNA processing and 30S ribosomal subunit biogenesis and possibly also in cell cycle regulation and energy metabolism.</text>
</comment>
<comment type="subunit">
    <text evidence="1">Monomer.</text>
</comment>
<comment type="subcellular location">
    <subcellularLocation>
        <location>Cytoplasm</location>
    </subcellularLocation>
    <subcellularLocation>
        <location evidence="1">Cell membrane</location>
        <topology evidence="1">Peripheral membrane protein</topology>
    </subcellularLocation>
</comment>
<comment type="similarity">
    <text evidence="1 2">Belongs to the TRAFAC class TrmE-Era-EngA-EngB-Septin-like GTPase superfamily. Era GTPase family.</text>
</comment>
<organism>
    <name type="scientific">Lysinibacillus sphaericus (strain C3-41)</name>
    <dbReference type="NCBI Taxonomy" id="444177"/>
    <lineage>
        <taxon>Bacteria</taxon>
        <taxon>Bacillati</taxon>
        <taxon>Bacillota</taxon>
        <taxon>Bacilli</taxon>
        <taxon>Bacillales</taxon>
        <taxon>Bacillaceae</taxon>
        <taxon>Lysinibacillus</taxon>
    </lineage>
</organism>
<gene>
    <name evidence="1" type="primary">era</name>
    <name type="ordered locus">Bsph_3710</name>
</gene>
<proteinExistence type="inferred from homology"/>
<sequence length="305" mass="34916">MLETRSGYKSGFISIIGRPNVGKSTFLNRVIGQKIAIMSDKPQTTRNKVQGVLTTTDSQMIFIDTPGIHKPKHKLGDFMLKVAKNTLREVDVIMFMVNAEQKLGKGDEFILEMLAGNSTPVFLVINKIDQIHPDELLGIIESYKERYEFAEIIPISALQGNNVESLLDTLPKYLPEGPQYYPADQVTDHPERFIIYELIREKVLHLTREEIPHSIAVVIDKIRRDEENNDKIHVAATIMVERDSQKGIVIGKRGALLKEVGTRARKDIEMLLGSKVYLELWVKVQKDWRNKSTHLRDFGFRDDEY</sequence>